<name>COBT_SHEAM</name>
<reference key="1">
    <citation type="submission" date="2006-12" db="EMBL/GenBank/DDBJ databases">
        <title>Complete sequence of Shewanella amazonensis SB2B.</title>
        <authorList>
            <consortium name="US DOE Joint Genome Institute"/>
            <person name="Copeland A."/>
            <person name="Lucas S."/>
            <person name="Lapidus A."/>
            <person name="Barry K."/>
            <person name="Detter J.C."/>
            <person name="Glavina del Rio T."/>
            <person name="Hammon N."/>
            <person name="Israni S."/>
            <person name="Dalin E."/>
            <person name="Tice H."/>
            <person name="Pitluck S."/>
            <person name="Munk A.C."/>
            <person name="Brettin T."/>
            <person name="Bruce D."/>
            <person name="Han C."/>
            <person name="Tapia R."/>
            <person name="Gilna P."/>
            <person name="Schmutz J."/>
            <person name="Larimer F."/>
            <person name="Land M."/>
            <person name="Hauser L."/>
            <person name="Kyrpides N."/>
            <person name="Mikhailova N."/>
            <person name="Fredrickson J."/>
            <person name="Richardson P."/>
        </authorList>
    </citation>
    <scope>NUCLEOTIDE SEQUENCE [LARGE SCALE GENOMIC DNA]</scope>
    <source>
        <strain>ATCC BAA-1098 / SB2B</strain>
    </source>
</reference>
<evidence type="ECO:0000255" key="1">
    <source>
        <dbReference type="HAMAP-Rule" id="MF_00230"/>
    </source>
</evidence>
<gene>
    <name evidence="1" type="primary">cobT</name>
    <name type="ordered locus">Sama_0762</name>
</gene>
<protein>
    <recommendedName>
        <fullName evidence="1">Nicotinate-nucleotide--dimethylbenzimidazole phosphoribosyltransferase</fullName>
        <shortName evidence="1">NN:DBI PRT</shortName>
        <ecNumber evidence="1">2.4.2.21</ecNumber>
    </recommendedName>
    <alternativeName>
        <fullName evidence="1">N(1)-alpha-phosphoribosyltransferase</fullName>
    </alternativeName>
</protein>
<accession>A1S3L3</accession>
<organism>
    <name type="scientific">Shewanella amazonensis (strain ATCC BAA-1098 / SB2B)</name>
    <dbReference type="NCBI Taxonomy" id="326297"/>
    <lineage>
        <taxon>Bacteria</taxon>
        <taxon>Pseudomonadati</taxon>
        <taxon>Pseudomonadota</taxon>
        <taxon>Gammaproteobacteria</taxon>
        <taxon>Alteromonadales</taxon>
        <taxon>Shewanellaceae</taxon>
        <taxon>Shewanella</taxon>
    </lineage>
</organism>
<sequence length="344" mass="35835">MFDIAPVSRERDEQIQACIDDKTKPRGALGALEPLAAHLARLLGEAPEIGRPAMLVFAADHGIASAGVSIAPPEVTGQMVANFAAGGAAINVFCRQLGWQLEIIDAGMLSAPPREMGVTDCRLGAGTGPIHKRAAMTLGQVEHGLAFGRERVRSHHAEGTNLIGLGEMGIGNTSSAAAVMAALMGLEAKDCVGRGTGVDAATLKRKQMLVEQALLLHLDMLTSPESVLACVGGFEIVEMTGAILGAAELGIPVLVDGFIATTAALAAVKMFPQSREYLIFAHRSAERAHGLMLAHMEAEPLLSLDMRLGEGTGAALALPLVQAAANFYREMASFSDAGITDVTP</sequence>
<proteinExistence type="inferred from homology"/>
<dbReference type="EC" id="2.4.2.21" evidence="1"/>
<dbReference type="EMBL" id="CP000507">
    <property type="protein sequence ID" value="ABL98969.1"/>
    <property type="molecule type" value="Genomic_DNA"/>
</dbReference>
<dbReference type="RefSeq" id="WP_011758879.1">
    <property type="nucleotide sequence ID" value="NC_008700.1"/>
</dbReference>
<dbReference type="SMR" id="A1S3L3"/>
<dbReference type="STRING" id="326297.Sama_0762"/>
<dbReference type="KEGG" id="saz:Sama_0762"/>
<dbReference type="eggNOG" id="COG2038">
    <property type="taxonomic scope" value="Bacteria"/>
</dbReference>
<dbReference type="HOGENOM" id="CLU_002982_0_0_6"/>
<dbReference type="OrthoDB" id="9781491at2"/>
<dbReference type="UniPathway" id="UPA00061">
    <property type="reaction ID" value="UER00516"/>
</dbReference>
<dbReference type="Proteomes" id="UP000009175">
    <property type="component" value="Chromosome"/>
</dbReference>
<dbReference type="GO" id="GO:0008939">
    <property type="term" value="F:nicotinate-nucleotide-dimethylbenzimidazole phosphoribosyltransferase activity"/>
    <property type="evidence" value="ECO:0007669"/>
    <property type="project" value="UniProtKB-UniRule"/>
</dbReference>
<dbReference type="GO" id="GO:0009236">
    <property type="term" value="P:cobalamin biosynthetic process"/>
    <property type="evidence" value="ECO:0007669"/>
    <property type="project" value="UniProtKB-KW"/>
</dbReference>
<dbReference type="CDD" id="cd02439">
    <property type="entry name" value="DMB-PRT_CobT"/>
    <property type="match status" value="1"/>
</dbReference>
<dbReference type="FunFam" id="3.40.50.10210:FF:000001">
    <property type="entry name" value="Nicotinate-nucleotide--dimethylbenzimidazole phosphoribosyltransferase"/>
    <property type="match status" value="1"/>
</dbReference>
<dbReference type="Gene3D" id="1.10.1610.10">
    <property type="match status" value="1"/>
</dbReference>
<dbReference type="Gene3D" id="3.40.50.10210">
    <property type="match status" value="1"/>
</dbReference>
<dbReference type="HAMAP" id="MF_00230">
    <property type="entry name" value="CobT"/>
    <property type="match status" value="1"/>
</dbReference>
<dbReference type="InterPro" id="IPR003200">
    <property type="entry name" value="Nict_dMeBzImd_PRibTrfase"/>
</dbReference>
<dbReference type="InterPro" id="IPR017846">
    <property type="entry name" value="Nict_dMeBzImd_PRibTrfase_bact"/>
</dbReference>
<dbReference type="InterPro" id="IPR023195">
    <property type="entry name" value="Nict_dMeBzImd_PRibTrfase_N"/>
</dbReference>
<dbReference type="InterPro" id="IPR036087">
    <property type="entry name" value="Nict_dMeBzImd_PRibTrfase_sf"/>
</dbReference>
<dbReference type="NCBIfam" id="TIGR03160">
    <property type="entry name" value="cobT_DBIPRT"/>
    <property type="match status" value="1"/>
</dbReference>
<dbReference type="NCBIfam" id="NF000996">
    <property type="entry name" value="PRK00105.1"/>
    <property type="match status" value="1"/>
</dbReference>
<dbReference type="PANTHER" id="PTHR43463">
    <property type="entry name" value="NICOTINATE-NUCLEOTIDE--DIMETHYLBENZIMIDAZOLE PHOSPHORIBOSYLTRANSFERASE"/>
    <property type="match status" value="1"/>
</dbReference>
<dbReference type="PANTHER" id="PTHR43463:SF1">
    <property type="entry name" value="NICOTINATE-NUCLEOTIDE--DIMETHYLBENZIMIDAZOLE PHOSPHORIBOSYLTRANSFERASE"/>
    <property type="match status" value="1"/>
</dbReference>
<dbReference type="Pfam" id="PF02277">
    <property type="entry name" value="DBI_PRT"/>
    <property type="match status" value="1"/>
</dbReference>
<dbReference type="SUPFAM" id="SSF52733">
    <property type="entry name" value="Nicotinate mononucleotide:5,6-dimethylbenzimidazole phosphoribosyltransferase (CobT)"/>
    <property type="match status" value="1"/>
</dbReference>
<comment type="function">
    <text evidence="1">Catalyzes the synthesis of alpha-ribazole-5'-phosphate from nicotinate mononucleotide (NAMN) and 5,6-dimethylbenzimidazole (DMB).</text>
</comment>
<comment type="catalytic activity">
    <reaction evidence="1">
        <text>5,6-dimethylbenzimidazole + nicotinate beta-D-ribonucleotide = alpha-ribazole 5'-phosphate + nicotinate + H(+)</text>
        <dbReference type="Rhea" id="RHEA:11196"/>
        <dbReference type="ChEBI" id="CHEBI:15378"/>
        <dbReference type="ChEBI" id="CHEBI:15890"/>
        <dbReference type="ChEBI" id="CHEBI:32544"/>
        <dbReference type="ChEBI" id="CHEBI:57502"/>
        <dbReference type="ChEBI" id="CHEBI:57918"/>
        <dbReference type="EC" id="2.4.2.21"/>
    </reaction>
</comment>
<comment type="pathway">
    <text evidence="1">Nucleoside biosynthesis; alpha-ribazole biosynthesis; alpha-ribazole from 5,6-dimethylbenzimidazole: step 1/2.</text>
</comment>
<comment type="similarity">
    <text evidence="1">Belongs to the CobT family.</text>
</comment>
<feature type="chain" id="PRO_1000021624" description="Nicotinate-nucleotide--dimethylbenzimidazole phosphoribosyltransferase">
    <location>
        <begin position="1"/>
        <end position="344"/>
    </location>
</feature>
<feature type="active site" description="Proton acceptor" evidence="1">
    <location>
        <position position="310"/>
    </location>
</feature>
<keyword id="KW-0169">Cobalamin biosynthesis</keyword>
<keyword id="KW-0328">Glycosyltransferase</keyword>
<keyword id="KW-1185">Reference proteome</keyword>
<keyword id="KW-0808">Transferase</keyword>